<feature type="chain" id="PRO_0000363629" description="Cytochrome c biogenesis protein CcsB">
    <location>
        <begin position="1"/>
        <end position="426"/>
    </location>
</feature>
<feature type="transmembrane region" description="Helical" evidence="1">
    <location>
        <begin position="11"/>
        <end position="31"/>
    </location>
</feature>
<feature type="transmembrane region" description="Helical" evidence="1">
    <location>
        <begin position="69"/>
        <end position="89"/>
    </location>
</feature>
<feature type="transmembrane region" description="Helical" evidence="1">
    <location>
        <begin position="159"/>
        <end position="179"/>
    </location>
</feature>
<sequence>MKRLIAWLSDLRVAIVLLFLIALASAVGTAIPQGDAPRSYVEAYATRPWLGLLNGEQVLQLQLDHVYSSVWFLSLLAWLGLALILCSWRRQWPALQAARRWIDYSNPRQLSKLAIAESLPCTDSNSALQAFSTVLSQQGWRLERKDNRLAARKGTAGRVGPLLVHTGLILLMLGAVWGVLAGNRLERFLAPGRTLDLLSRDGDSQVSILLEAFQVDRDPAGRAEQFRSQLHLEENGNSLDREISVNHPLRHRGITIYQADWSLAAITLQIGRSPQLQLALRSFPELGEQVWGLVLPTRPDGSEPVFLSVENEQGPINIFDTDGTLLTLLRPGGPAVDVKGLPMRVNSVLPASGLLLKRDPGVPLVYLGFAVMLIGGGLSLIATRQLWAIASEGQLHVGGLCNRNLTAFSKELPSLLRQTALAHQQG</sequence>
<reference key="1">
    <citation type="submission" date="2005-08" db="EMBL/GenBank/DDBJ databases">
        <title>Complete sequence of Synechococcus sp. CC9902.</title>
        <authorList>
            <person name="Copeland A."/>
            <person name="Lucas S."/>
            <person name="Lapidus A."/>
            <person name="Barry K."/>
            <person name="Detter J.C."/>
            <person name="Glavina T."/>
            <person name="Hammon N."/>
            <person name="Israni S."/>
            <person name="Pitluck S."/>
            <person name="Martinez M."/>
            <person name="Schmutz J."/>
            <person name="Larimer F."/>
            <person name="Land M."/>
            <person name="Kyrpides N."/>
            <person name="Ivanova N."/>
            <person name="Richardson P."/>
        </authorList>
    </citation>
    <scope>NUCLEOTIDE SEQUENCE [LARGE SCALE GENOMIC DNA]</scope>
    <source>
        <strain>CC9902</strain>
    </source>
</reference>
<proteinExistence type="inferred from homology"/>
<accession>Q3AZN7</accession>
<evidence type="ECO:0000255" key="1">
    <source>
        <dbReference type="HAMAP-Rule" id="MF_01392"/>
    </source>
</evidence>
<name>CCS1_SYNS9</name>
<comment type="function">
    <text evidence="1">Required during biogenesis of c-type cytochromes (cytochrome c6 and cytochrome f) at the step of heme attachment.</text>
</comment>
<comment type="subunit">
    <text evidence="1">May interact with CcsA.</text>
</comment>
<comment type="subcellular location">
    <subcellularLocation>
        <location evidence="1">Cellular thylakoid membrane</location>
        <topology evidence="1">Multi-pass membrane protein</topology>
    </subcellularLocation>
</comment>
<comment type="similarity">
    <text evidence="1">Belongs to the Ccs1/CcsB family.</text>
</comment>
<dbReference type="EMBL" id="CP000097">
    <property type="protein sequence ID" value="ABB25440.1"/>
    <property type="molecule type" value="Genomic_DNA"/>
</dbReference>
<dbReference type="RefSeq" id="WP_011359291.1">
    <property type="nucleotide sequence ID" value="NC_007513.1"/>
</dbReference>
<dbReference type="STRING" id="316279.Syncc9902_0472"/>
<dbReference type="KEGG" id="sye:Syncc9902_0472"/>
<dbReference type="eggNOG" id="COG1333">
    <property type="taxonomic scope" value="Bacteria"/>
</dbReference>
<dbReference type="HOGENOM" id="CLU_034630_0_0_3"/>
<dbReference type="OrthoDB" id="9770923at2"/>
<dbReference type="Proteomes" id="UP000002712">
    <property type="component" value="Chromosome"/>
</dbReference>
<dbReference type="GO" id="GO:0031676">
    <property type="term" value="C:plasma membrane-derived thylakoid membrane"/>
    <property type="evidence" value="ECO:0007669"/>
    <property type="project" value="UniProtKB-SubCell"/>
</dbReference>
<dbReference type="GO" id="GO:0017004">
    <property type="term" value="P:cytochrome complex assembly"/>
    <property type="evidence" value="ECO:0007669"/>
    <property type="project" value="UniProtKB-UniRule"/>
</dbReference>
<dbReference type="HAMAP" id="MF_01392">
    <property type="entry name" value="CytC_Ccs1"/>
    <property type="match status" value="1"/>
</dbReference>
<dbReference type="InterPro" id="IPR023494">
    <property type="entry name" value="Cyt_c_bgen_Ccs1/CcsB/ResB"/>
</dbReference>
<dbReference type="InterPro" id="IPR007816">
    <property type="entry name" value="ResB-like_domain"/>
</dbReference>
<dbReference type="PANTHER" id="PTHR31566">
    <property type="entry name" value="CYTOCHROME C BIOGENESIS PROTEIN CCS1, CHLOROPLASTIC"/>
    <property type="match status" value="1"/>
</dbReference>
<dbReference type="PANTHER" id="PTHR31566:SF0">
    <property type="entry name" value="CYTOCHROME C BIOGENESIS PROTEIN CCS1, CHLOROPLASTIC"/>
    <property type="match status" value="1"/>
</dbReference>
<dbReference type="Pfam" id="PF05140">
    <property type="entry name" value="ResB"/>
    <property type="match status" value="2"/>
</dbReference>
<protein>
    <recommendedName>
        <fullName evidence="1">Cytochrome c biogenesis protein CcsB</fullName>
    </recommendedName>
</protein>
<keyword id="KW-0201">Cytochrome c-type biogenesis</keyword>
<keyword id="KW-0472">Membrane</keyword>
<keyword id="KW-1185">Reference proteome</keyword>
<keyword id="KW-0793">Thylakoid</keyword>
<keyword id="KW-0812">Transmembrane</keyword>
<keyword id="KW-1133">Transmembrane helix</keyword>
<gene>
    <name evidence="1" type="primary">ccsB</name>
    <name evidence="1" type="synonym">ccs1</name>
    <name type="ordered locus">Syncc9902_0472</name>
</gene>
<organism>
    <name type="scientific">Synechococcus sp. (strain CC9902)</name>
    <dbReference type="NCBI Taxonomy" id="316279"/>
    <lineage>
        <taxon>Bacteria</taxon>
        <taxon>Bacillati</taxon>
        <taxon>Cyanobacteriota</taxon>
        <taxon>Cyanophyceae</taxon>
        <taxon>Synechococcales</taxon>
        <taxon>Synechococcaceae</taxon>
        <taxon>Synechococcus</taxon>
    </lineage>
</organism>